<evidence type="ECO:0000255" key="1"/>
<evidence type="ECO:0000305" key="2"/>
<comment type="function">
    <text>Potential transporter for phosphate.</text>
</comment>
<comment type="subcellular location">
    <subcellularLocation>
        <location evidence="2">Cell membrane</location>
        <topology evidence="2">Multi-pass membrane protein</topology>
    </subcellularLocation>
</comment>
<comment type="similarity">
    <text evidence="2">Belongs to the inorganic phosphate transporter (PiT) (TC 2.A.20) family.</text>
</comment>
<reference key="1">
    <citation type="journal article" date="1997" name="Nature">
        <title>The complete genome sequence of the gastric pathogen Helicobacter pylori.</title>
        <authorList>
            <person name="Tomb J.-F."/>
            <person name="White O."/>
            <person name="Kerlavage A.R."/>
            <person name="Clayton R.A."/>
            <person name="Sutton G.G."/>
            <person name="Fleischmann R.D."/>
            <person name="Ketchum K.A."/>
            <person name="Klenk H.-P."/>
            <person name="Gill S.R."/>
            <person name="Dougherty B.A."/>
            <person name="Nelson K.E."/>
            <person name="Quackenbush J."/>
            <person name="Zhou L."/>
            <person name="Kirkness E.F."/>
            <person name="Peterson S.N."/>
            <person name="Loftus B.J."/>
            <person name="Richardson D.L."/>
            <person name="Dodson R.J."/>
            <person name="Khalak H.G."/>
            <person name="Glodek A."/>
            <person name="McKenney K."/>
            <person name="FitzGerald L.M."/>
            <person name="Lee N."/>
            <person name="Adams M.D."/>
            <person name="Hickey E.K."/>
            <person name="Berg D.E."/>
            <person name="Gocayne J.D."/>
            <person name="Utterback T.R."/>
            <person name="Peterson J.D."/>
            <person name="Kelley J.M."/>
            <person name="Cotton M.D."/>
            <person name="Weidman J.F."/>
            <person name="Fujii C."/>
            <person name="Bowman C."/>
            <person name="Watthey L."/>
            <person name="Wallin E."/>
            <person name="Hayes W.S."/>
            <person name="Borodovsky M."/>
            <person name="Karp P.D."/>
            <person name="Smith H.O."/>
            <person name="Fraser C.M."/>
            <person name="Venter J.C."/>
        </authorList>
    </citation>
    <scope>NUCLEOTIDE SEQUENCE [LARGE SCALE GENOMIC DNA]</scope>
    <source>
        <strain>ATCC 700392 / 26695</strain>
    </source>
</reference>
<name>Y1491_HELPY</name>
<gene>
    <name type="ordered locus">HP_1491</name>
</gene>
<proteinExistence type="inferred from homology"/>
<keyword id="KW-1003">Cell membrane</keyword>
<keyword id="KW-0472">Membrane</keyword>
<keyword id="KW-0592">Phosphate transport</keyword>
<keyword id="KW-1185">Reference proteome</keyword>
<keyword id="KW-0812">Transmembrane</keyword>
<keyword id="KW-1133">Transmembrane helix</keyword>
<keyword id="KW-0813">Transport</keyword>
<protein>
    <recommendedName>
        <fullName>Putative phosphate permease HP_1491</fullName>
    </recommendedName>
</protein>
<feature type="chain" id="PRO_0000080799" description="Putative phosphate permease HP_1491">
    <location>
        <begin position="1"/>
        <end position="533"/>
    </location>
</feature>
<feature type="transmembrane region" description="Helical" evidence="1">
    <location>
        <begin position="23"/>
        <end position="43"/>
    </location>
</feature>
<feature type="transmembrane region" description="Helical" evidence="1">
    <location>
        <begin position="47"/>
        <end position="67"/>
    </location>
</feature>
<feature type="transmembrane region" description="Helical" evidence="1">
    <location>
        <begin position="81"/>
        <end position="101"/>
    </location>
</feature>
<feature type="transmembrane region" description="Helical" evidence="1">
    <location>
        <begin position="129"/>
        <end position="149"/>
    </location>
</feature>
<feature type="transmembrane region" description="Helical" evidence="1">
    <location>
        <begin position="156"/>
        <end position="176"/>
    </location>
</feature>
<feature type="transmembrane region" description="Helical" evidence="1">
    <location>
        <begin position="182"/>
        <end position="202"/>
    </location>
</feature>
<feature type="transmembrane region" description="Helical" evidence="1">
    <location>
        <begin position="221"/>
        <end position="241"/>
    </location>
</feature>
<feature type="transmembrane region" description="Helical" evidence="1">
    <location>
        <begin position="248"/>
        <end position="268"/>
    </location>
</feature>
<feature type="transmembrane region" description="Helical" evidence="1">
    <location>
        <begin position="286"/>
        <end position="306"/>
    </location>
</feature>
<feature type="transmembrane region" description="Helical" evidence="1">
    <location>
        <begin position="338"/>
        <end position="358"/>
    </location>
</feature>
<feature type="transmembrane region" description="Helical" evidence="1">
    <location>
        <begin position="372"/>
        <end position="392"/>
    </location>
</feature>
<feature type="transmembrane region" description="Helical" evidence="1">
    <location>
        <begin position="509"/>
        <end position="529"/>
    </location>
</feature>
<accession>O26024</accession>
<sequence length="533" mass="57277">MEIKNIKEFEKASKKLQKDTLKIALALLFLIGAALLALIFGQANSKGLLLIFAAVIGGYMAMNIGANDVSNNVGPAVGSKAISMGGAILIAAICEMLGAIIAGGEVVSTIKGRIVSPEFINDAHIFINVMLASLLSGALWLHVATLIGAPVSTSHSVVGGIMGAGMAAAGMVAVNWHFLSGIVASWVISPLMGALIAMFFLMLIKKTIAYKEDKKSAALKVVPYLVALMSLTFSWYLIVKVLKRLYALNFEIQLACGCILALLIFILFKRFVLKKAPQLENSHESINELFNVPLIFAAALLSFAHGANDVANAIGPLAAISQTLEDANSPIGNTLSSVPLWIMVVGAAGIALGLSLYGPKLIKTVGSEITELDKMQAFCIALSAVITVLLASQLGLPVSSTHIVVGAVFGVGFLRERLREQSRRRFARIRDNIVAAHFGEDLEEIEGFLERFDKANLKEKSLMLESLKKSKNTAIALELKKKEKKSLKKVYKEEVIKRSILKKIVTAWLVTVPVSALLGALLFVALGFIEKYF</sequence>
<dbReference type="EMBL" id="AE000511">
    <property type="protein sequence ID" value="AAD08533.1"/>
    <property type="molecule type" value="Genomic_DNA"/>
</dbReference>
<dbReference type="PIR" id="C64706">
    <property type="entry name" value="C64706"/>
</dbReference>
<dbReference type="RefSeq" id="NP_208282.1">
    <property type="nucleotide sequence ID" value="NC_000915.1"/>
</dbReference>
<dbReference type="RefSeq" id="WP_000403632.1">
    <property type="nucleotide sequence ID" value="NC_018939.1"/>
</dbReference>
<dbReference type="SMR" id="O26024"/>
<dbReference type="FunCoup" id="O26024">
    <property type="interactions" value="286"/>
</dbReference>
<dbReference type="IntAct" id="O26024">
    <property type="interactions" value="3"/>
</dbReference>
<dbReference type="STRING" id="85962.HP_1491"/>
<dbReference type="TCDB" id="2.A.20.2.9">
    <property type="family name" value="the inorganic phosphate transporter (pit) family"/>
</dbReference>
<dbReference type="PaxDb" id="85962-C694_07725"/>
<dbReference type="EnsemblBacteria" id="AAD08533">
    <property type="protein sequence ID" value="AAD08533"/>
    <property type="gene ID" value="HP_1491"/>
</dbReference>
<dbReference type="KEGG" id="heo:C694_07725"/>
<dbReference type="KEGG" id="hpy:HP_1491"/>
<dbReference type="PATRIC" id="fig|85962.47.peg.1603"/>
<dbReference type="eggNOG" id="COG0306">
    <property type="taxonomic scope" value="Bacteria"/>
</dbReference>
<dbReference type="InParanoid" id="O26024"/>
<dbReference type="OrthoDB" id="9779554at2"/>
<dbReference type="PhylomeDB" id="O26024"/>
<dbReference type="Proteomes" id="UP000000429">
    <property type="component" value="Chromosome"/>
</dbReference>
<dbReference type="GO" id="GO:0005886">
    <property type="term" value="C:plasma membrane"/>
    <property type="evidence" value="ECO:0007669"/>
    <property type="project" value="UniProtKB-SubCell"/>
</dbReference>
<dbReference type="GO" id="GO:0005315">
    <property type="term" value="F:phosphate transmembrane transporter activity"/>
    <property type="evidence" value="ECO:0000318"/>
    <property type="project" value="GO_Central"/>
</dbReference>
<dbReference type="GO" id="GO:0035435">
    <property type="term" value="P:phosphate ion transmembrane transport"/>
    <property type="evidence" value="ECO:0000318"/>
    <property type="project" value="GO_Central"/>
</dbReference>
<dbReference type="InterPro" id="IPR001204">
    <property type="entry name" value="Phos_transporter"/>
</dbReference>
<dbReference type="PANTHER" id="PTHR11101">
    <property type="entry name" value="PHOSPHATE TRANSPORTER"/>
    <property type="match status" value="1"/>
</dbReference>
<dbReference type="PANTHER" id="PTHR11101:SF80">
    <property type="entry name" value="PHOSPHATE TRANSPORTER"/>
    <property type="match status" value="1"/>
</dbReference>
<dbReference type="Pfam" id="PF01384">
    <property type="entry name" value="PHO4"/>
    <property type="match status" value="1"/>
</dbReference>
<organism>
    <name type="scientific">Helicobacter pylori (strain ATCC 700392 / 26695)</name>
    <name type="common">Campylobacter pylori</name>
    <dbReference type="NCBI Taxonomy" id="85962"/>
    <lineage>
        <taxon>Bacteria</taxon>
        <taxon>Pseudomonadati</taxon>
        <taxon>Campylobacterota</taxon>
        <taxon>Epsilonproteobacteria</taxon>
        <taxon>Campylobacterales</taxon>
        <taxon>Helicobacteraceae</taxon>
        <taxon>Helicobacter</taxon>
    </lineage>
</organism>